<proteinExistence type="evidence at transcript level"/>
<geneLocation type="chloroplast"/>
<accession>Q85FG7</accession>
<dbReference type="EMBL" id="AY178864">
    <property type="protein sequence ID" value="AAP29449.2"/>
    <property type="molecule type" value="Genomic_DNA"/>
</dbReference>
<dbReference type="RefSeq" id="NP_848118.2">
    <property type="nucleotide sequence ID" value="NC_004766.1"/>
</dbReference>
<dbReference type="GeneID" id="807449"/>
<dbReference type="GO" id="GO:0009706">
    <property type="term" value="C:chloroplast inner membrane"/>
    <property type="evidence" value="ECO:0007669"/>
    <property type="project" value="UniProtKB-SubCell"/>
</dbReference>
<dbReference type="GO" id="GO:0015031">
    <property type="term" value="P:protein transport"/>
    <property type="evidence" value="ECO:0007669"/>
    <property type="project" value="UniProtKB-KW"/>
</dbReference>
<dbReference type="InterPro" id="IPR008896">
    <property type="entry name" value="TIC214"/>
</dbReference>
<dbReference type="PANTHER" id="PTHR33163:SF40">
    <property type="entry name" value="PROTEIN TIC 214"/>
    <property type="match status" value="1"/>
</dbReference>
<dbReference type="PANTHER" id="PTHR33163">
    <property type="entry name" value="PROTEIN TIC 214-RELATED"/>
    <property type="match status" value="1"/>
</dbReference>
<dbReference type="Pfam" id="PF05758">
    <property type="entry name" value="Ycf1"/>
    <property type="match status" value="3"/>
</dbReference>
<organism>
    <name type="scientific">Adiantum capillus-veneris</name>
    <name type="common">Maidenhair fern</name>
    <dbReference type="NCBI Taxonomy" id="13818"/>
    <lineage>
        <taxon>Eukaryota</taxon>
        <taxon>Viridiplantae</taxon>
        <taxon>Streptophyta</taxon>
        <taxon>Embryophyta</taxon>
        <taxon>Tracheophyta</taxon>
        <taxon>Polypodiopsida</taxon>
        <taxon>Polypodiidae</taxon>
        <taxon>Polypodiales</taxon>
        <taxon>Pteridineae</taxon>
        <taxon>Pteridaceae</taxon>
        <taxon>Vittarioideae</taxon>
        <taxon>Adiantum</taxon>
    </lineage>
</organism>
<gene>
    <name evidence="1" type="primary">TIC214</name>
    <name type="synonym">ycf1</name>
</gene>
<sequence length="1691" mass="198957">MNTKILLSLPWPKLMDPYMLLGFYYGLLTTLPVGPSQILCVRSFLLGGNLSGLISISGSVLAQLITASSIYCSPIYLLLLRPHLLTIVAIPYTLLFCLVIKDFPNYQILRPVTSLRDSRVARLFLISFFFQILNPIMLPNSVLTRLIYLYFFRYSTNTVFMVSTFMGWLTGQAAFNFFSRLLLSRVKGDSPILYLVAKRFIYATFSIVSISYAVAYLGRAPVSFWTKKFMNESHDREMNLWEIAEYSDLLWWFFKPWPTSFFDPSRANRSNRFVKNRRFHMNNTFYKGRTSTYFFEKCLTDGKERLSFLALPSLSIFGKEMYQSMAKSRRSFGIRLSYQNWVSKKLAKTKFFEKELTDQIKLLDTGSSFSKTMSRKTRLMGGKRRRIPRTYDPFVNNFRIRIPVSQTFLLEDDLGLSLWEWDKLATERKNRKAKKTVRINAIKDKIFTKDRRWKHGYGNPLPWEPLPSRSKRMFYFIFENRALYDYDLQNILKKIKSSPTLDVTWKEIMDLDYEDHILFLTYLEVGCCHRFGWISPLKAFLRKSSKSLSNVERRIRRLNKIGNLSMDLARYTILYFENNFDIPGGDGDFRYRKLRNVGITFAKGKPRSERLMKRYAKVSDFRRKFLKGSMRSRRRKTLLWKALQEKIRSSFFLRSAERTILFQSLIERLTTSSREEKFSELEKDTDYEFQKQLLDISLSAKRSLIGESKLTRSAIAARSDIGPIHNGRGYMLVFQSRFRKFIKLPVLIVLKNIGRILLRQNSEWNKDWTGWKKEIHINCTFDGEDFSQDELPPRWLREGIQIKIVYPFQLKPWHTDGNEKQHTLQRKHKEIGSKSRELKSKRKLKQKKHKFTYLTVLGYQTDIPFGTIQKKTSFWKPVRRKLIRICKRSLPRQIKQAYQFIHSRFEKVSKLNSTPSKKLNLISNLRQGGKLLSDYSLDEKSWMKTSSTNYVNEKTKPNCNVISNSERFIAIGGEMSPANVTRKQLVTRDQVEREFLMSIVAVDSKNLLDEKIDDPYSKITSKDLETGDTTSGDINLVNSTKFERKQLVDSEEAGLSLYLLVRELIETFVSVLINLPFTINRIFVHYFTEFLALYTKLAGILDNINEGSNLSTRSKSLQFDLPSQTCIYIDMWNIGMRGSLNLDLLVNDKRSSSNCGVKNRQSGIYVETDGVSNLYQPKMYEKQTPVHYNLIATKFLSPEIRNNHVNDLTMCFDTETGKTDEEFFDEKVARSIENWGFLNKSCKLDEINWNEWLYSLSRYNLPLTAWRNIAPRKWKVCLSELSSIETNTITELKDQVSQNKLHSYYSIYTKKSFLRNKISNFSKLRKHRNLLQNLTDSVQNGDVENLSVQRDIMEQRFHCKSCIQKSSRGGRNRISKFVHFLSSNVESKNNLNLQIDLLSWLDPDIAKTKIFLKKKKKAKQLKNPLLRNHYRYRYVLDISGRFQKVLNQLNDLTLDEREDADYIFRWKFKFETELEKFRNLISLTRMLGDDQDLITLCTNIEVNSDLLNLQFNAKTKRDMFHNLSVVSAHRLRLVFDDQDLLYKIINPLLKFKGRLRGIFRRRLYRNVYNGSYISNLSHILTERNCKQSCLYNIDDLLSPRRRREFRFLYCLLSPKIEYSQYISRIKKIDNAEKKQTLYHLPRPIRIQKIKRFLWPSHRLEEAACTGRSCVGVMTGSRFVTLRIRMYPIPLN</sequence>
<keyword id="KW-0150">Chloroplast</keyword>
<keyword id="KW-0472">Membrane</keyword>
<keyword id="KW-0934">Plastid</keyword>
<keyword id="KW-1001">Plastid inner membrane</keyword>
<keyword id="KW-0653">Protein transport</keyword>
<keyword id="KW-0691">RNA editing</keyword>
<keyword id="KW-0812">Transmembrane</keyword>
<keyword id="KW-1133">Transmembrane helix</keyword>
<keyword id="KW-0813">Transport</keyword>
<feature type="chain" id="PRO_0000217296" description="Protein TIC 214">
    <location>
        <begin position="1"/>
        <end position="1691"/>
    </location>
</feature>
<feature type="transmembrane region" description="Helical" evidence="2">
    <location>
        <begin position="19"/>
        <end position="39"/>
    </location>
</feature>
<feature type="transmembrane region" description="Helical" evidence="2">
    <location>
        <begin position="60"/>
        <end position="80"/>
    </location>
</feature>
<feature type="transmembrane region" description="Helical" evidence="2">
    <location>
        <begin position="84"/>
        <end position="104"/>
    </location>
</feature>
<feature type="transmembrane region" description="Helical" evidence="2">
    <location>
        <begin position="123"/>
        <end position="143"/>
    </location>
</feature>
<feature type="transmembrane region" description="Helical" evidence="2">
    <location>
        <begin position="158"/>
        <end position="178"/>
    </location>
</feature>
<feature type="transmembrane region" description="Helical" evidence="2">
    <location>
        <begin position="200"/>
        <end position="220"/>
    </location>
</feature>
<feature type="region of interest" description="Disordered" evidence="3">
    <location>
        <begin position="819"/>
        <end position="839"/>
    </location>
</feature>
<name>TI214_ADICA</name>
<reference key="1">
    <citation type="journal article" date="2003" name="DNA Res.">
        <title>Complete nucleotide sequence of the chloroplast genome from a leptosporangiate fern, Adiantum capillus-veneris L.</title>
        <authorList>
            <person name="Wolf P.G."/>
            <person name="Rowe C.A."/>
            <person name="Sinclair R.B."/>
            <person name="Hasebe M."/>
        </authorList>
    </citation>
    <scope>NUCLEOTIDE SEQUENCE [LARGE SCALE GENOMIC DNA]</scope>
</reference>
<reference key="2">
    <citation type="journal article" date="2004" name="Gene">
        <title>High levels of RNA editing in a vascular plant chloroplast genome: analysis of transcripts from the fern Adiantum capillus-veneris.</title>
        <authorList>
            <person name="Wolf P.G."/>
            <person name="Rowe C.A."/>
            <person name="Hasebe M."/>
        </authorList>
    </citation>
    <scope>NUCLEOTIDE SEQUENCE [GENOMIC DNA]</scope>
    <scope>RNA EDITING</scope>
    <source>
        <tissue>Frond</tissue>
    </source>
</reference>
<evidence type="ECO:0000250" key="1">
    <source>
        <dbReference type="UniProtKB" id="P56785"/>
    </source>
</evidence>
<evidence type="ECO:0000255" key="2"/>
<evidence type="ECO:0000256" key="3">
    <source>
        <dbReference type="SAM" id="MobiDB-lite"/>
    </source>
</evidence>
<evidence type="ECO:0000269" key="4">
    <source>
    </source>
</evidence>
<evidence type="ECO:0000305" key="5"/>
<comment type="function">
    <text evidence="1">Involved in protein precursor import into chloroplasts. May be part of an intermediate translocation complex acting as a protein-conducting channel at the inner envelope.</text>
</comment>
<comment type="subunit">
    <text evidence="1">Part of the Tic complex.</text>
</comment>
<comment type="subcellular location">
    <subcellularLocation>
        <location evidence="1">Plastid</location>
        <location evidence="1">Chloroplast inner membrane</location>
        <topology evidence="2">Multi-pass membrane protein</topology>
    </subcellularLocation>
</comment>
<comment type="RNA editing">
    <location>
        <position position="1" evidence="4"/>
    </location>
    <text>The initiator methionine is created by RNA editing.</text>
</comment>
<comment type="similarity">
    <text evidence="5">Belongs to the TIC214 family.</text>
</comment>
<protein>
    <recommendedName>
        <fullName evidence="1">Protein TIC 214</fullName>
    </recommendedName>
    <alternativeName>
        <fullName evidence="1">Translocon at the inner envelope membrane of chloroplasts 214</fullName>
        <shortName evidence="1">AtTIC214</shortName>
    </alternativeName>
</protein>